<keyword id="KW-0665">Pyrimidine biosynthesis</keyword>
<keyword id="KW-0808">Transferase</keyword>
<reference key="1">
    <citation type="submission" date="2007-04" db="EMBL/GenBank/DDBJ databases">
        <title>Complete sequence of chromosome of Rhodobacter sphaeroides ATCC 17025.</title>
        <authorList>
            <consortium name="US DOE Joint Genome Institute"/>
            <person name="Copeland A."/>
            <person name="Lucas S."/>
            <person name="Lapidus A."/>
            <person name="Barry K."/>
            <person name="Detter J.C."/>
            <person name="Glavina del Rio T."/>
            <person name="Hammon N."/>
            <person name="Israni S."/>
            <person name="Dalin E."/>
            <person name="Tice H."/>
            <person name="Pitluck S."/>
            <person name="Chertkov O."/>
            <person name="Brettin T."/>
            <person name="Bruce D."/>
            <person name="Han C."/>
            <person name="Schmutz J."/>
            <person name="Larimer F."/>
            <person name="Land M."/>
            <person name="Hauser L."/>
            <person name="Kyrpides N."/>
            <person name="Kim E."/>
            <person name="Richardson P."/>
            <person name="Mackenzie C."/>
            <person name="Choudhary M."/>
            <person name="Donohue T.J."/>
            <person name="Kaplan S."/>
        </authorList>
    </citation>
    <scope>NUCLEOTIDE SEQUENCE [LARGE SCALE GENOMIC DNA]</scope>
    <source>
        <strain>ATCC 17025 / ATH 2.4.3</strain>
    </source>
</reference>
<sequence>MTFRARHLLGIEQLAPDEIRSVLDLADSYVDLNRRTMKQSDALAGMTQINMFFENSTRTQSSFELAGKRLGADVMNMAVAQSSVKKGETLLDTAMTLNAMHPDLLVVRHPASGAVNLLASKVNCAVLNAGDGRHEHPTQALLDALTIRRAKGRIQRLTVAICGDIAHSRVARSNLILLGKMENRVRLIAPPTLMPPGVGEFGCELYDDMKKGLEGADVVMMLRLQKERMDGAFIPSEREYYHRFGLDADKLAFAREDAIVMHPGPMNRGVEIDGTLADDINRSVIQDQVEMGVAVRMACMDLLARNLRAERGRAAVGVMV</sequence>
<accession>A4WP19</accession>
<dbReference type="EC" id="2.1.3.2" evidence="1"/>
<dbReference type="EMBL" id="CP000661">
    <property type="protein sequence ID" value="ABP69133.1"/>
    <property type="molecule type" value="Genomic_DNA"/>
</dbReference>
<dbReference type="SMR" id="A4WP19"/>
<dbReference type="STRING" id="349102.Rsph17025_0223"/>
<dbReference type="KEGG" id="rsq:Rsph17025_0223"/>
<dbReference type="eggNOG" id="COG0540">
    <property type="taxonomic scope" value="Bacteria"/>
</dbReference>
<dbReference type="HOGENOM" id="CLU_043846_2_0_5"/>
<dbReference type="BioCyc" id="RSPH349102:G1G8M-229-MONOMER"/>
<dbReference type="UniPathway" id="UPA00070">
    <property type="reaction ID" value="UER00116"/>
</dbReference>
<dbReference type="GO" id="GO:0005829">
    <property type="term" value="C:cytosol"/>
    <property type="evidence" value="ECO:0007669"/>
    <property type="project" value="TreeGrafter"/>
</dbReference>
<dbReference type="GO" id="GO:0016597">
    <property type="term" value="F:amino acid binding"/>
    <property type="evidence" value="ECO:0007669"/>
    <property type="project" value="InterPro"/>
</dbReference>
<dbReference type="GO" id="GO:0004070">
    <property type="term" value="F:aspartate carbamoyltransferase activity"/>
    <property type="evidence" value="ECO:0007669"/>
    <property type="project" value="UniProtKB-UniRule"/>
</dbReference>
<dbReference type="GO" id="GO:0006207">
    <property type="term" value="P:'de novo' pyrimidine nucleobase biosynthetic process"/>
    <property type="evidence" value="ECO:0007669"/>
    <property type="project" value="InterPro"/>
</dbReference>
<dbReference type="GO" id="GO:0044205">
    <property type="term" value="P:'de novo' UMP biosynthetic process"/>
    <property type="evidence" value="ECO:0007669"/>
    <property type="project" value="UniProtKB-UniRule"/>
</dbReference>
<dbReference type="GO" id="GO:0006520">
    <property type="term" value="P:amino acid metabolic process"/>
    <property type="evidence" value="ECO:0007669"/>
    <property type="project" value="InterPro"/>
</dbReference>
<dbReference type="FunFam" id="3.40.50.1370:FF:000007">
    <property type="entry name" value="Aspartate carbamoyltransferase"/>
    <property type="match status" value="1"/>
</dbReference>
<dbReference type="Gene3D" id="3.40.50.1370">
    <property type="entry name" value="Aspartate/ornithine carbamoyltransferase"/>
    <property type="match status" value="2"/>
</dbReference>
<dbReference type="HAMAP" id="MF_00001">
    <property type="entry name" value="Asp_carb_tr"/>
    <property type="match status" value="1"/>
</dbReference>
<dbReference type="InterPro" id="IPR006132">
    <property type="entry name" value="Asp/Orn_carbamoyltranf_P-bd"/>
</dbReference>
<dbReference type="InterPro" id="IPR006130">
    <property type="entry name" value="Asp/Orn_carbamoylTrfase"/>
</dbReference>
<dbReference type="InterPro" id="IPR036901">
    <property type="entry name" value="Asp/Orn_carbamoylTrfase_sf"/>
</dbReference>
<dbReference type="InterPro" id="IPR002082">
    <property type="entry name" value="Asp_carbamoyltransf"/>
</dbReference>
<dbReference type="InterPro" id="IPR006131">
    <property type="entry name" value="Asp_carbamoyltransf_Asp/Orn-bd"/>
</dbReference>
<dbReference type="NCBIfam" id="TIGR00670">
    <property type="entry name" value="asp_carb_tr"/>
    <property type="match status" value="1"/>
</dbReference>
<dbReference type="NCBIfam" id="NF002032">
    <property type="entry name" value="PRK00856.1"/>
    <property type="match status" value="1"/>
</dbReference>
<dbReference type="PANTHER" id="PTHR45753:SF6">
    <property type="entry name" value="ASPARTATE CARBAMOYLTRANSFERASE"/>
    <property type="match status" value="1"/>
</dbReference>
<dbReference type="PANTHER" id="PTHR45753">
    <property type="entry name" value="ORNITHINE CARBAMOYLTRANSFERASE, MITOCHONDRIAL"/>
    <property type="match status" value="1"/>
</dbReference>
<dbReference type="Pfam" id="PF00185">
    <property type="entry name" value="OTCace"/>
    <property type="match status" value="1"/>
</dbReference>
<dbReference type="Pfam" id="PF02729">
    <property type="entry name" value="OTCace_N"/>
    <property type="match status" value="1"/>
</dbReference>
<dbReference type="PRINTS" id="PR00100">
    <property type="entry name" value="AOTCASE"/>
</dbReference>
<dbReference type="PRINTS" id="PR00101">
    <property type="entry name" value="ATCASE"/>
</dbReference>
<dbReference type="SUPFAM" id="SSF53671">
    <property type="entry name" value="Aspartate/ornithine carbamoyltransferase"/>
    <property type="match status" value="1"/>
</dbReference>
<dbReference type="PROSITE" id="PS00097">
    <property type="entry name" value="CARBAMOYLTRANSFERASE"/>
    <property type="match status" value="1"/>
</dbReference>
<protein>
    <recommendedName>
        <fullName evidence="1">Aspartate carbamoyltransferase catalytic subunit</fullName>
        <ecNumber evidence="1">2.1.3.2</ecNumber>
    </recommendedName>
    <alternativeName>
        <fullName evidence="1">Aspartate transcarbamylase</fullName>
        <shortName evidence="1">ATCase</shortName>
    </alternativeName>
</protein>
<proteinExistence type="inferred from homology"/>
<name>PYRB_CERS5</name>
<feature type="chain" id="PRO_1000000020" description="Aspartate carbamoyltransferase catalytic subunit">
    <location>
        <begin position="1"/>
        <end position="320"/>
    </location>
</feature>
<feature type="binding site" evidence="1">
    <location>
        <position position="58"/>
    </location>
    <ligand>
        <name>carbamoyl phosphate</name>
        <dbReference type="ChEBI" id="CHEBI:58228"/>
    </ligand>
</feature>
<feature type="binding site" evidence="1">
    <location>
        <position position="59"/>
    </location>
    <ligand>
        <name>carbamoyl phosphate</name>
        <dbReference type="ChEBI" id="CHEBI:58228"/>
    </ligand>
</feature>
<feature type="binding site" evidence="1">
    <location>
        <position position="86"/>
    </location>
    <ligand>
        <name>L-aspartate</name>
        <dbReference type="ChEBI" id="CHEBI:29991"/>
    </ligand>
</feature>
<feature type="binding site" evidence="1">
    <location>
        <position position="108"/>
    </location>
    <ligand>
        <name>carbamoyl phosphate</name>
        <dbReference type="ChEBI" id="CHEBI:58228"/>
    </ligand>
</feature>
<feature type="binding site" evidence="1">
    <location>
        <position position="136"/>
    </location>
    <ligand>
        <name>carbamoyl phosphate</name>
        <dbReference type="ChEBI" id="CHEBI:58228"/>
    </ligand>
</feature>
<feature type="binding site" evidence="1">
    <location>
        <position position="139"/>
    </location>
    <ligand>
        <name>carbamoyl phosphate</name>
        <dbReference type="ChEBI" id="CHEBI:58228"/>
    </ligand>
</feature>
<feature type="binding site" evidence="1">
    <location>
        <position position="169"/>
    </location>
    <ligand>
        <name>L-aspartate</name>
        <dbReference type="ChEBI" id="CHEBI:29991"/>
    </ligand>
</feature>
<feature type="binding site" evidence="1">
    <location>
        <position position="223"/>
    </location>
    <ligand>
        <name>L-aspartate</name>
        <dbReference type="ChEBI" id="CHEBI:29991"/>
    </ligand>
</feature>
<feature type="binding site" evidence="1">
    <location>
        <position position="264"/>
    </location>
    <ligand>
        <name>carbamoyl phosphate</name>
        <dbReference type="ChEBI" id="CHEBI:58228"/>
    </ligand>
</feature>
<feature type="binding site" evidence="1">
    <location>
        <position position="265"/>
    </location>
    <ligand>
        <name>carbamoyl phosphate</name>
        <dbReference type="ChEBI" id="CHEBI:58228"/>
    </ligand>
</feature>
<comment type="function">
    <text evidence="1">Catalyzes the condensation of carbamoyl phosphate and aspartate to form carbamoyl aspartate and inorganic phosphate, the committed step in the de novo pyrimidine nucleotide biosynthesis pathway.</text>
</comment>
<comment type="catalytic activity">
    <reaction evidence="1">
        <text>carbamoyl phosphate + L-aspartate = N-carbamoyl-L-aspartate + phosphate + H(+)</text>
        <dbReference type="Rhea" id="RHEA:20013"/>
        <dbReference type="ChEBI" id="CHEBI:15378"/>
        <dbReference type="ChEBI" id="CHEBI:29991"/>
        <dbReference type="ChEBI" id="CHEBI:32814"/>
        <dbReference type="ChEBI" id="CHEBI:43474"/>
        <dbReference type="ChEBI" id="CHEBI:58228"/>
        <dbReference type="EC" id="2.1.3.2"/>
    </reaction>
</comment>
<comment type="pathway">
    <text evidence="1">Pyrimidine metabolism; UMP biosynthesis via de novo pathway; (S)-dihydroorotate from bicarbonate: step 2/3.</text>
</comment>
<comment type="subunit">
    <text evidence="1">Heterododecamer (2C3:3R2) of six catalytic PyrB chains organized as two trimers (C3), and six regulatory PyrI chains organized as three dimers (R2).</text>
</comment>
<comment type="similarity">
    <text evidence="1">Belongs to the aspartate/ornithine carbamoyltransferase superfamily. ATCase family.</text>
</comment>
<evidence type="ECO:0000255" key="1">
    <source>
        <dbReference type="HAMAP-Rule" id="MF_00001"/>
    </source>
</evidence>
<organism>
    <name type="scientific">Cereibacter sphaeroides (strain ATCC 17025 / ATH 2.4.3)</name>
    <name type="common">Rhodobacter sphaeroides</name>
    <dbReference type="NCBI Taxonomy" id="349102"/>
    <lineage>
        <taxon>Bacteria</taxon>
        <taxon>Pseudomonadati</taxon>
        <taxon>Pseudomonadota</taxon>
        <taxon>Alphaproteobacteria</taxon>
        <taxon>Rhodobacterales</taxon>
        <taxon>Paracoccaceae</taxon>
        <taxon>Cereibacter</taxon>
    </lineage>
</organism>
<gene>
    <name evidence="1" type="primary">pyrB</name>
    <name type="ordered locus">Rsph17025_0223</name>
</gene>